<keyword id="KW-0997">Cell inner membrane</keyword>
<keyword id="KW-1003">Cell membrane</keyword>
<keyword id="KW-0472">Membrane</keyword>
<keyword id="KW-0808">Transferase</keyword>
<keyword id="KW-0812">Transmembrane</keyword>
<keyword id="KW-1133">Transmembrane helix</keyword>
<feature type="chain" id="PRO_1000053520" description="Phosphatidylglycerol--prolipoprotein diacylglyceryl transferase">
    <location>
        <begin position="1"/>
        <end position="293"/>
    </location>
</feature>
<feature type="transmembrane region" description="Helical" evidence="1">
    <location>
        <begin position="4"/>
        <end position="24"/>
    </location>
</feature>
<feature type="transmembrane region" description="Helical" evidence="1">
    <location>
        <begin position="45"/>
        <end position="65"/>
    </location>
</feature>
<feature type="transmembrane region" description="Helical" evidence="1">
    <location>
        <begin position="81"/>
        <end position="101"/>
    </location>
</feature>
<feature type="transmembrane region" description="Helical" evidence="1">
    <location>
        <begin position="115"/>
        <end position="135"/>
    </location>
</feature>
<feature type="transmembrane region" description="Helical" evidence="1">
    <location>
        <begin position="204"/>
        <end position="224"/>
    </location>
</feature>
<feature type="transmembrane region" description="Helical" evidence="1">
    <location>
        <begin position="231"/>
        <end position="249"/>
    </location>
</feature>
<feature type="transmembrane region" description="Helical" evidence="1">
    <location>
        <begin position="262"/>
        <end position="282"/>
    </location>
</feature>
<feature type="binding site" evidence="1">
    <location>
        <position position="165"/>
    </location>
    <ligand>
        <name>a 1,2-diacyl-sn-glycero-3-phospho-(1'-sn-glycerol)</name>
        <dbReference type="ChEBI" id="CHEBI:64716"/>
    </ligand>
</feature>
<accession>A5IKR3</accession>
<gene>
    <name evidence="1" type="primary">lgt</name>
    <name type="ordered locus">Tpet_0767</name>
</gene>
<reference key="1">
    <citation type="submission" date="2007-05" db="EMBL/GenBank/DDBJ databases">
        <title>Complete sequence of Thermotoga petrophila RKU-1.</title>
        <authorList>
            <consortium name="US DOE Joint Genome Institute"/>
            <person name="Copeland A."/>
            <person name="Lucas S."/>
            <person name="Lapidus A."/>
            <person name="Barry K."/>
            <person name="Glavina del Rio T."/>
            <person name="Dalin E."/>
            <person name="Tice H."/>
            <person name="Pitluck S."/>
            <person name="Sims D."/>
            <person name="Brettin T."/>
            <person name="Bruce D."/>
            <person name="Detter J.C."/>
            <person name="Han C."/>
            <person name="Tapia R."/>
            <person name="Schmutz J."/>
            <person name="Larimer F."/>
            <person name="Land M."/>
            <person name="Hauser L."/>
            <person name="Kyrpides N."/>
            <person name="Mikhailova N."/>
            <person name="Nelson K."/>
            <person name="Gogarten J.P."/>
            <person name="Noll K."/>
            <person name="Richardson P."/>
        </authorList>
    </citation>
    <scope>NUCLEOTIDE SEQUENCE [LARGE SCALE GENOMIC DNA]</scope>
    <source>
        <strain>ATCC BAA-488 / DSM 13995 / JCM 10881 / RKU-1</strain>
    </source>
</reference>
<organism>
    <name type="scientific">Thermotoga petrophila (strain ATCC BAA-488 / DSM 13995 / JCM 10881 / RKU-1)</name>
    <dbReference type="NCBI Taxonomy" id="390874"/>
    <lineage>
        <taxon>Bacteria</taxon>
        <taxon>Thermotogati</taxon>
        <taxon>Thermotogota</taxon>
        <taxon>Thermotogae</taxon>
        <taxon>Thermotogales</taxon>
        <taxon>Thermotogaceae</taxon>
        <taxon>Thermotoga</taxon>
    </lineage>
</organism>
<evidence type="ECO:0000255" key="1">
    <source>
        <dbReference type="HAMAP-Rule" id="MF_01147"/>
    </source>
</evidence>
<sequence length="293" mass="33945">MKKILAFLSIAAGSTLFFVFLFIFLSKVFSGEILLSRYIFRIGGFELRWYSTLILTGFLISYFVARKRAKNEGINLEEFDELIFYGVIAGIVGARLYYVLFNLKYYRSLWDALKIWEGGLAIHGAVIGALLTGFLYVRLKKPSFTFLQATDLFTSVLPLGQAIGRWGNFFNYEAFGVPTNLPWKMFVPEPYRPVVYKDYSFFHPTFLYESIWDLLVFFMLSVYFKRYRKRHGEVTCLYFVLYSLGRIVIERLRVDSLMIGNIKAAQLLSAVLILLGFTGFLILRSSQEPKRAF</sequence>
<proteinExistence type="inferred from homology"/>
<comment type="function">
    <text evidence="1">Catalyzes the transfer of the diacylglyceryl group from phosphatidylglycerol to the sulfhydryl group of the N-terminal cysteine of a prolipoprotein, the first step in the formation of mature lipoproteins.</text>
</comment>
<comment type="catalytic activity">
    <reaction evidence="1">
        <text>L-cysteinyl-[prolipoprotein] + a 1,2-diacyl-sn-glycero-3-phospho-(1'-sn-glycerol) = an S-1,2-diacyl-sn-glyceryl-L-cysteinyl-[prolipoprotein] + sn-glycerol 1-phosphate + H(+)</text>
        <dbReference type="Rhea" id="RHEA:56712"/>
        <dbReference type="Rhea" id="RHEA-COMP:14679"/>
        <dbReference type="Rhea" id="RHEA-COMP:14680"/>
        <dbReference type="ChEBI" id="CHEBI:15378"/>
        <dbReference type="ChEBI" id="CHEBI:29950"/>
        <dbReference type="ChEBI" id="CHEBI:57685"/>
        <dbReference type="ChEBI" id="CHEBI:64716"/>
        <dbReference type="ChEBI" id="CHEBI:140658"/>
        <dbReference type="EC" id="2.5.1.145"/>
    </reaction>
</comment>
<comment type="pathway">
    <text evidence="1">Protein modification; lipoprotein biosynthesis (diacylglyceryl transfer).</text>
</comment>
<comment type="subcellular location">
    <subcellularLocation>
        <location evidence="1">Cell inner membrane</location>
        <topology evidence="1">Multi-pass membrane protein</topology>
    </subcellularLocation>
</comment>
<comment type="similarity">
    <text evidence="1">Belongs to the Lgt family.</text>
</comment>
<dbReference type="EC" id="2.5.1.145" evidence="1"/>
<dbReference type="EMBL" id="CP000702">
    <property type="protein sequence ID" value="ABQ46786.1"/>
    <property type="molecule type" value="Genomic_DNA"/>
</dbReference>
<dbReference type="RefSeq" id="WP_011943360.1">
    <property type="nucleotide sequence ID" value="NC_009486.1"/>
</dbReference>
<dbReference type="SMR" id="A5IKR3"/>
<dbReference type="STRING" id="390874.Tpet_0767"/>
<dbReference type="KEGG" id="tpt:Tpet_0767"/>
<dbReference type="eggNOG" id="COG0682">
    <property type="taxonomic scope" value="Bacteria"/>
</dbReference>
<dbReference type="HOGENOM" id="CLU_013386_1_2_0"/>
<dbReference type="UniPathway" id="UPA00664"/>
<dbReference type="Proteomes" id="UP000006558">
    <property type="component" value="Chromosome"/>
</dbReference>
<dbReference type="GO" id="GO:0005886">
    <property type="term" value="C:plasma membrane"/>
    <property type="evidence" value="ECO:0007669"/>
    <property type="project" value="UniProtKB-SubCell"/>
</dbReference>
<dbReference type="GO" id="GO:0008961">
    <property type="term" value="F:phosphatidylglycerol-prolipoprotein diacylglyceryl transferase activity"/>
    <property type="evidence" value="ECO:0007669"/>
    <property type="project" value="UniProtKB-UniRule"/>
</dbReference>
<dbReference type="GO" id="GO:0042158">
    <property type="term" value="P:lipoprotein biosynthetic process"/>
    <property type="evidence" value="ECO:0007669"/>
    <property type="project" value="UniProtKB-UniRule"/>
</dbReference>
<dbReference type="HAMAP" id="MF_01147">
    <property type="entry name" value="Lgt"/>
    <property type="match status" value="1"/>
</dbReference>
<dbReference type="InterPro" id="IPR001640">
    <property type="entry name" value="Lgt"/>
</dbReference>
<dbReference type="NCBIfam" id="TIGR00544">
    <property type="entry name" value="lgt"/>
    <property type="match status" value="1"/>
</dbReference>
<dbReference type="PANTHER" id="PTHR30589:SF0">
    <property type="entry name" value="PHOSPHATIDYLGLYCEROL--PROLIPOPROTEIN DIACYLGLYCERYL TRANSFERASE"/>
    <property type="match status" value="1"/>
</dbReference>
<dbReference type="PANTHER" id="PTHR30589">
    <property type="entry name" value="PROLIPOPROTEIN DIACYLGLYCERYL TRANSFERASE"/>
    <property type="match status" value="1"/>
</dbReference>
<dbReference type="Pfam" id="PF01790">
    <property type="entry name" value="LGT"/>
    <property type="match status" value="1"/>
</dbReference>
<dbReference type="PROSITE" id="PS01311">
    <property type="entry name" value="LGT"/>
    <property type="match status" value="1"/>
</dbReference>
<protein>
    <recommendedName>
        <fullName evidence="1">Phosphatidylglycerol--prolipoprotein diacylglyceryl transferase</fullName>
        <ecNumber evidence="1">2.5.1.145</ecNumber>
    </recommendedName>
</protein>
<name>LGT_THEP1</name>